<dbReference type="EMBL" id="M20160">
    <property type="protein sequence ID" value="AAA31012.1"/>
    <property type="molecule type" value="mRNA"/>
</dbReference>
<dbReference type="EMBL" id="AY372988">
    <property type="protein sequence ID" value="AAR27961.1"/>
    <property type="molecule type" value="mRNA"/>
</dbReference>
<dbReference type="EMBL" id="M27969">
    <property type="protein sequence ID" value="AAA31009.1"/>
    <property type="molecule type" value="mRNA"/>
</dbReference>
<dbReference type="PIR" id="A24627">
    <property type="entry name" value="A24627"/>
</dbReference>
<dbReference type="PIR" id="A28706">
    <property type="entry name" value="A28706"/>
</dbReference>
<dbReference type="RefSeq" id="XP_020936653.1">
    <property type="nucleotide sequence ID" value="XM_021080994.1"/>
</dbReference>
<dbReference type="PDB" id="1NX0">
    <property type="method" value="X-ray"/>
    <property type="resolution" value="2.30 A"/>
    <property type="chains" value="C/D=231-241"/>
</dbReference>
<dbReference type="PDB" id="1NX1">
    <property type="method" value="X-ray"/>
    <property type="resolution" value="2.00 A"/>
    <property type="chains" value="C/D=231-241"/>
</dbReference>
<dbReference type="PDBsum" id="1NX0"/>
<dbReference type="PDBsum" id="1NX1"/>
<dbReference type="SMR" id="P12675"/>
<dbReference type="FunCoup" id="P12675">
    <property type="interactions" value="293"/>
</dbReference>
<dbReference type="STRING" id="9823.ENSSSCP00000015070"/>
<dbReference type="MEROPS" id="I27.001"/>
<dbReference type="GlyGen" id="P12675">
    <property type="glycosylation" value="2 sites"/>
</dbReference>
<dbReference type="PaxDb" id="9823-ENSSSCP00000015070"/>
<dbReference type="PeptideAtlas" id="P12675"/>
<dbReference type="Ensembl" id="ENSSSCT00070019868.1">
    <property type="protein sequence ID" value="ENSSSCP00070016515.1"/>
    <property type="gene ID" value="ENSSSCG00070009854.1"/>
</dbReference>
<dbReference type="Ensembl" id="ENSSSCT00115038666">
    <property type="protein sequence ID" value="ENSSSCP00115036478"/>
    <property type="gene ID" value="ENSSSCG00115019983"/>
</dbReference>
<dbReference type="GeneID" id="397135"/>
<dbReference type="eggNOG" id="ENOG502RHIZ">
    <property type="taxonomic scope" value="Eukaryota"/>
</dbReference>
<dbReference type="InParanoid" id="P12675"/>
<dbReference type="Reactome" id="R-SSC-1474228">
    <property type="pathway name" value="Degradation of the extracellular matrix"/>
</dbReference>
<dbReference type="EvolutionaryTrace" id="P12675"/>
<dbReference type="Proteomes" id="UP000008227">
    <property type="component" value="Unplaced"/>
</dbReference>
<dbReference type="Proteomes" id="UP000314985">
    <property type="component" value="Chromosome 2"/>
</dbReference>
<dbReference type="Proteomes" id="UP000694570">
    <property type="component" value="Unplaced"/>
</dbReference>
<dbReference type="Proteomes" id="UP000694571">
    <property type="component" value="Unplaced"/>
</dbReference>
<dbReference type="Proteomes" id="UP000694720">
    <property type="component" value="Unplaced"/>
</dbReference>
<dbReference type="Proteomes" id="UP000694722">
    <property type="component" value="Unplaced"/>
</dbReference>
<dbReference type="Proteomes" id="UP000694723">
    <property type="component" value="Unplaced"/>
</dbReference>
<dbReference type="Proteomes" id="UP000694724">
    <property type="component" value="Unplaced"/>
</dbReference>
<dbReference type="Proteomes" id="UP000694725">
    <property type="component" value="Unplaced"/>
</dbReference>
<dbReference type="Proteomes" id="UP000694726">
    <property type="component" value="Unplaced"/>
</dbReference>
<dbReference type="Proteomes" id="UP000694727">
    <property type="component" value="Unplaced"/>
</dbReference>
<dbReference type="Proteomes" id="UP000694728">
    <property type="component" value="Unplaced"/>
</dbReference>
<dbReference type="GO" id="GO:0005737">
    <property type="term" value="C:cytoplasm"/>
    <property type="evidence" value="ECO:0000318"/>
    <property type="project" value="GO_Central"/>
</dbReference>
<dbReference type="GO" id="GO:0010859">
    <property type="term" value="F:calcium-dependent cysteine-type endopeptidase inhibitor activity"/>
    <property type="evidence" value="ECO:0000318"/>
    <property type="project" value="GO_Central"/>
</dbReference>
<dbReference type="GO" id="GO:0030163">
    <property type="term" value="P:protein catabolic process"/>
    <property type="evidence" value="ECO:0000314"/>
    <property type="project" value="MGI"/>
</dbReference>
<dbReference type="InterPro" id="IPR026998">
    <property type="entry name" value="Calpastatin"/>
</dbReference>
<dbReference type="InterPro" id="IPR001259">
    <property type="entry name" value="Prot_inh_calpain"/>
</dbReference>
<dbReference type="PANTHER" id="PTHR10077">
    <property type="entry name" value="CALPASTATIN"/>
    <property type="match status" value="1"/>
</dbReference>
<dbReference type="PANTHER" id="PTHR10077:SF0">
    <property type="entry name" value="CALPASTATIN"/>
    <property type="match status" value="1"/>
</dbReference>
<dbReference type="Pfam" id="PF00748">
    <property type="entry name" value="Calpain_inhib"/>
    <property type="match status" value="4"/>
</dbReference>
<gene>
    <name type="primary">CAST</name>
</gene>
<protein>
    <recommendedName>
        <fullName>Calpastatin</fullName>
    </recommendedName>
    <alternativeName>
        <fullName>Calpain inhibitor</fullName>
    </alternativeName>
</protein>
<evidence type="ECO:0000250" key="1"/>
<evidence type="ECO:0000250" key="2">
    <source>
        <dbReference type="UniProtKB" id="P20810"/>
    </source>
</evidence>
<evidence type="ECO:0000250" key="3">
    <source>
        <dbReference type="UniProtKB" id="P27321"/>
    </source>
</evidence>
<evidence type="ECO:0000250" key="4">
    <source>
        <dbReference type="UniProtKB" id="P51125"/>
    </source>
</evidence>
<evidence type="ECO:0000256" key="5">
    <source>
        <dbReference type="SAM" id="MobiDB-lite"/>
    </source>
</evidence>
<evidence type="ECO:0000305" key="6"/>
<evidence type="ECO:0007829" key="7">
    <source>
        <dbReference type="PDB" id="1NX1"/>
    </source>
</evidence>
<proteinExistence type="evidence at protein level"/>
<feature type="chain" id="PRO_0000147634" description="Calpastatin">
    <location>
        <begin position="1"/>
        <end position="713"/>
    </location>
</feature>
<feature type="repeat" description="Inhibitory domain 1">
    <location>
        <begin position="171"/>
        <end position="223"/>
    </location>
</feature>
<feature type="repeat" description="Inhibitory domain 2">
    <location>
        <begin position="307"/>
        <end position="359"/>
    </location>
</feature>
<feature type="repeat" description="Inhibitory domain 3">
    <location>
        <begin position="447"/>
        <end position="500"/>
    </location>
</feature>
<feature type="repeat" description="Inhibitory domain 4">
    <location>
        <begin position="583"/>
        <end position="636"/>
    </location>
</feature>
<feature type="region of interest" description="Disordered" evidence="5">
    <location>
        <begin position="1"/>
        <end position="187"/>
    </location>
</feature>
<feature type="region of interest" description="Disordered" evidence="5">
    <location>
        <begin position="211"/>
        <end position="506"/>
    </location>
</feature>
<feature type="region of interest" description="Disordered" evidence="5">
    <location>
        <begin position="536"/>
        <end position="713"/>
    </location>
</feature>
<feature type="compositionally biased region" description="Basic residues" evidence="5">
    <location>
        <begin position="21"/>
        <end position="30"/>
    </location>
</feature>
<feature type="compositionally biased region" description="Basic and acidic residues" evidence="5">
    <location>
        <begin position="46"/>
        <end position="63"/>
    </location>
</feature>
<feature type="compositionally biased region" description="Polar residues" evidence="5">
    <location>
        <begin position="85"/>
        <end position="94"/>
    </location>
</feature>
<feature type="compositionally biased region" description="Basic and acidic residues" evidence="5">
    <location>
        <begin position="248"/>
        <end position="258"/>
    </location>
</feature>
<feature type="compositionally biased region" description="Basic and acidic residues" evidence="5">
    <location>
        <begin position="304"/>
        <end position="332"/>
    </location>
</feature>
<feature type="compositionally biased region" description="Basic and acidic residues" evidence="5">
    <location>
        <begin position="342"/>
        <end position="367"/>
    </location>
</feature>
<feature type="compositionally biased region" description="Acidic residues" evidence="5">
    <location>
        <begin position="370"/>
        <end position="379"/>
    </location>
</feature>
<feature type="compositionally biased region" description="Basic and acidic residues" evidence="5">
    <location>
        <begin position="380"/>
        <end position="397"/>
    </location>
</feature>
<feature type="compositionally biased region" description="Basic and acidic residues" evidence="5">
    <location>
        <begin position="443"/>
        <end position="502"/>
    </location>
</feature>
<feature type="compositionally biased region" description="Polar residues" evidence="5">
    <location>
        <begin position="542"/>
        <end position="553"/>
    </location>
</feature>
<feature type="compositionally biased region" description="Basic and acidic residues" evidence="5">
    <location>
        <begin position="583"/>
        <end position="646"/>
    </location>
</feature>
<feature type="compositionally biased region" description="Basic and acidic residues" evidence="5">
    <location>
        <begin position="691"/>
        <end position="713"/>
    </location>
</feature>
<feature type="modified residue" description="N6-acetyllysine" evidence="4">
    <location>
        <position position="50"/>
    </location>
</feature>
<feature type="modified residue" description="Phosphoserine" evidence="4">
    <location>
        <position position="87"/>
    </location>
</feature>
<feature type="modified residue" description="Phosphoserine" evidence="2">
    <location>
        <position position="134"/>
    </location>
</feature>
<feature type="modified residue" description="Phosphothreonine" evidence="3">
    <location>
        <position position="136"/>
    </location>
</feature>
<feature type="modified residue" description="Phosphoserine" evidence="2">
    <location>
        <position position="244"/>
    </location>
</feature>
<feature type="modified residue" description="Phosphoserine" evidence="2">
    <location>
        <position position="367"/>
    </location>
</feature>
<feature type="modified residue" description="Phosphoserine" evidence="2">
    <location>
        <position position="369"/>
    </location>
</feature>
<feature type="modified residue" description="Phosphoserine" evidence="2">
    <location>
        <position position="376"/>
    </location>
</feature>
<feature type="modified residue" description="Phosphoserine" evidence="2">
    <location>
        <position position="441"/>
    </location>
</feature>
<feature type="modified residue" description="Phosphoserine" evidence="2">
    <location>
        <position position="517"/>
    </location>
</feature>
<feature type="modified residue" description="Phosphoserine" evidence="2">
    <location>
        <position position="528"/>
    </location>
</feature>
<feature type="modified residue" description="Phosphoserine" evidence="2">
    <location>
        <position position="575"/>
    </location>
</feature>
<feature type="modified residue" description="Phosphoserine" evidence="2">
    <location>
        <position position="577"/>
    </location>
</feature>
<feature type="cross-link" description="Glycyl lysine isopeptide (Lys-Gly) (interchain with G-Cter in SUMO2)" evidence="2">
    <location>
        <position position="32"/>
    </location>
</feature>
<feature type="sequence conflict" description="In Ref. 3; AAA31009." evidence="6" ref="3">
    <original>L</original>
    <variation>V</variation>
    <location>
        <position position="328"/>
    </location>
</feature>
<feature type="helix" evidence="7">
    <location>
        <begin position="232"/>
        <end position="239"/>
    </location>
</feature>
<accession>P12675</accession>
<accession>Q3ZTQ5</accession>
<sequence length="713" mass="77124">MNPTETKAIPVSKQLEGPHSPNKKRHKKQAVKTEPEKKSQSTKPSVVHEKKTQEVKPKEHPEPKSLPTHSADAGSKRAHKEKAVSRSNEQPTSEKSTKPKAKPQDPTPSDGKLSVTGVSAASGKPAETKKDDKSLTSSVPAESKSSKPSGKSDMDAALDDLIDTLGGPEETEEDNTTYTGPEVLDPMSSTYIEELGKREVTLPPKYRELLDKKEGIPVPPPDTSKPLGPDDAIDALSLDLTCSSPTADGKKTEKEKSTGEVLKAQSVGVIKSAAAPPHEKKRRVEEDTMSDQALEALSASLGSRKSEPELDLSSIKEIDEAKAKEEKLKKCGEDDETVPPEYRLKPAMDKDGKPLLPEAEEKPKPLSESELIDELSEDFDQSKRKEKQSKPTEKTKESQATAPTPVGEAVSRTSLCCVQSAPPKPATGMVPDDAVEALAGSLGKKEADPEDGKPVEDKVKEKAKEEDREKLGEKEETIPPDYRLEEVKDKDGKTLPHKDPKEPVLPLSEDFVLDALSQDFAGPPAASSLFEDAKLSAAVSEVVSQTSAPTTHSAGPPPDTVSDDKKLDDALDQLSDSLGQRQPDPDENKPIEDKVKEKAEAEHRDKLGERDDTIPPEYRHLLDKDEEGKSTKPPTKKPEAPKKPEAAQDPIDALSGDFDRCPSTTETSENTTKDKDKKTASKSKAPKNGGKAKDSTKAKEETSKQKSDGKSTS</sequence>
<keyword id="KW-0002">3D-structure</keyword>
<keyword id="KW-0007">Acetylation</keyword>
<keyword id="KW-1017">Isopeptide bond</keyword>
<keyword id="KW-0597">Phosphoprotein</keyword>
<keyword id="KW-0646">Protease inhibitor</keyword>
<keyword id="KW-1185">Reference proteome</keyword>
<keyword id="KW-0677">Repeat</keyword>
<keyword id="KW-0789">Thiol protease inhibitor</keyword>
<keyword id="KW-0832">Ubl conjugation</keyword>
<name>ICAL_PIG</name>
<comment type="function">
    <text>Specific inhibition of calpain (calcium-dependent cysteine protease). Plays a key role in postmortem tenderization of meat and have been proposed to be involved in muscle protein degradation in living tissue.</text>
</comment>
<comment type="domain">
    <text evidence="1">Each of the four flexible inhibitory domains can inhibit one calcium-bound calpain molecule by occupying both sides of the active site.</text>
</comment>
<comment type="similarity">
    <text evidence="6">Belongs to the protease inhibitor I27 (calpastatin) family.</text>
</comment>
<organism>
    <name type="scientific">Sus scrofa</name>
    <name type="common">Pig</name>
    <dbReference type="NCBI Taxonomy" id="9823"/>
    <lineage>
        <taxon>Eukaryota</taxon>
        <taxon>Metazoa</taxon>
        <taxon>Chordata</taxon>
        <taxon>Craniata</taxon>
        <taxon>Vertebrata</taxon>
        <taxon>Euteleostomi</taxon>
        <taxon>Mammalia</taxon>
        <taxon>Eutheria</taxon>
        <taxon>Laurasiatheria</taxon>
        <taxon>Artiodactyla</taxon>
        <taxon>Suina</taxon>
        <taxon>Suidae</taxon>
        <taxon>Sus</taxon>
    </lineage>
</organism>
<reference key="1">
    <citation type="journal article" date="1988" name="Biochemistry">
        <title>Pig heart calpastatin: identification of repetitive domain structures and anomalous behavior in polyacrylamide gel electrophoresis.</title>
        <authorList>
            <person name="Takano E."/>
            <person name="Maki M."/>
            <person name="Mori H."/>
            <person name="Hatanaka M."/>
            <person name="Marti T."/>
            <person name="Titani K."/>
            <person name="Kannagi R."/>
            <person name="Ooi T."/>
            <person name="Murachi T."/>
        </authorList>
    </citation>
    <scope>NUCLEOTIDE SEQUENCE [MRNA]</scope>
    <source>
        <tissue>Heart</tissue>
    </source>
</reference>
<reference key="2">
    <citation type="journal article" date="2005" name="Am. J. Respir. Cell Mol. Biol.">
        <title>Involvement of calpain-calpastatin in cigarette smoke-induced inhibition of lung endothelial nitric oxide synthase.</title>
        <authorList>
            <person name="Cui Z."/>
            <person name="Han Z."/>
            <person name="Li Z."/>
            <person name="Hu H."/>
            <person name="Patel J.M."/>
            <person name="Antony V."/>
            <person name="Block E.R."/>
            <person name="Su Y."/>
        </authorList>
    </citation>
    <scope>NUCLEOTIDE SEQUENCE [MRNA]</scope>
</reference>
<reference key="3">
    <citation type="journal article" date="1986" name="FEBS Lett.">
        <title>Evidence for the repetitive domain structure of pig calpastatin as demonstrated by cloning of complementary DNA.</title>
        <authorList>
            <person name="Takano E."/>
            <person name="Maki M."/>
            <person name="Hatanaka M."/>
            <person name="Mori H."/>
            <person name="Zenita K."/>
            <person name="Sakihama T."/>
            <person name="Kannagi R."/>
            <person name="Marti T."/>
            <person name="Titani K."/>
            <person name="Murachi T."/>
        </authorList>
    </citation>
    <scope>NUCLEOTIDE SEQUENCE [MRNA] OF 304-554</scope>
</reference>